<name>APAG_SHESW</name>
<accession>A1RMU9</accession>
<dbReference type="EMBL" id="CP000503">
    <property type="protein sequence ID" value="ABM25994.1"/>
    <property type="molecule type" value="Genomic_DNA"/>
</dbReference>
<dbReference type="RefSeq" id="WP_011790444.1">
    <property type="nucleotide sequence ID" value="NC_008750.1"/>
</dbReference>
<dbReference type="SMR" id="A1RMU9"/>
<dbReference type="KEGG" id="shw:Sputw3181_3179"/>
<dbReference type="HOGENOM" id="CLU_128074_0_0_6"/>
<dbReference type="Proteomes" id="UP000002597">
    <property type="component" value="Chromosome"/>
</dbReference>
<dbReference type="GO" id="GO:0070987">
    <property type="term" value="P:error-free translesion synthesis"/>
    <property type="evidence" value="ECO:0007669"/>
    <property type="project" value="TreeGrafter"/>
</dbReference>
<dbReference type="Gene3D" id="2.60.40.1470">
    <property type="entry name" value="ApaG domain"/>
    <property type="match status" value="1"/>
</dbReference>
<dbReference type="HAMAP" id="MF_00791">
    <property type="entry name" value="ApaG"/>
    <property type="match status" value="1"/>
</dbReference>
<dbReference type="InterPro" id="IPR007474">
    <property type="entry name" value="ApaG_domain"/>
</dbReference>
<dbReference type="InterPro" id="IPR036767">
    <property type="entry name" value="ApaG_sf"/>
</dbReference>
<dbReference type="InterPro" id="IPR023065">
    <property type="entry name" value="Uncharacterised_ApaG"/>
</dbReference>
<dbReference type="NCBIfam" id="NF003967">
    <property type="entry name" value="PRK05461.1"/>
    <property type="match status" value="1"/>
</dbReference>
<dbReference type="PANTHER" id="PTHR14289">
    <property type="entry name" value="F-BOX ONLY PROTEIN 3"/>
    <property type="match status" value="1"/>
</dbReference>
<dbReference type="PANTHER" id="PTHR14289:SF16">
    <property type="entry name" value="POLYMERASE DELTA-INTERACTING PROTEIN 2"/>
    <property type="match status" value="1"/>
</dbReference>
<dbReference type="Pfam" id="PF04379">
    <property type="entry name" value="DUF525"/>
    <property type="match status" value="1"/>
</dbReference>
<dbReference type="SUPFAM" id="SSF110069">
    <property type="entry name" value="ApaG-like"/>
    <property type="match status" value="1"/>
</dbReference>
<dbReference type="PROSITE" id="PS51087">
    <property type="entry name" value="APAG"/>
    <property type="match status" value="1"/>
</dbReference>
<sequence>MSALDTSIRVEVKTEYIEQQSSPEDEKYLFSYTITIINLGEQAAKLETRHWIITDANGNTSEVQGAGVVGETPTIPPNTAYQYTSGTLLDTPLGIMHGTYGMVSESGERFEAIIKPFRLATPGLLH</sequence>
<gene>
    <name evidence="1" type="primary">apaG</name>
    <name type="ordered locus">Sputw3181_3179</name>
</gene>
<proteinExistence type="inferred from homology"/>
<reference key="1">
    <citation type="submission" date="2006-12" db="EMBL/GenBank/DDBJ databases">
        <title>Complete sequence of Shewanella sp. W3-18-1.</title>
        <authorList>
            <consortium name="US DOE Joint Genome Institute"/>
            <person name="Copeland A."/>
            <person name="Lucas S."/>
            <person name="Lapidus A."/>
            <person name="Barry K."/>
            <person name="Detter J.C."/>
            <person name="Glavina del Rio T."/>
            <person name="Hammon N."/>
            <person name="Israni S."/>
            <person name="Dalin E."/>
            <person name="Tice H."/>
            <person name="Pitluck S."/>
            <person name="Chain P."/>
            <person name="Malfatti S."/>
            <person name="Shin M."/>
            <person name="Vergez L."/>
            <person name="Schmutz J."/>
            <person name="Larimer F."/>
            <person name="Land M."/>
            <person name="Hauser L."/>
            <person name="Kyrpides N."/>
            <person name="Lykidis A."/>
            <person name="Tiedje J."/>
            <person name="Richardson P."/>
        </authorList>
    </citation>
    <scope>NUCLEOTIDE SEQUENCE [LARGE SCALE GENOMIC DNA]</scope>
    <source>
        <strain>W3-18-1</strain>
    </source>
</reference>
<evidence type="ECO:0000255" key="1">
    <source>
        <dbReference type="HAMAP-Rule" id="MF_00791"/>
    </source>
</evidence>
<organism>
    <name type="scientific">Shewanella sp. (strain W3-18-1)</name>
    <dbReference type="NCBI Taxonomy" id="351745"/>
    <lineage>
        <taxon>Bacteria</taxon>
        <taxon>Pseudomonadati</taxon>
        <taxon>Pseudomonadota</taxon>
        <taxon>Gammaproteobacteria</taxon>
        <taxon>Alteromonadales</taxon>
        <taxon>Shewanellaceae</taxon>
        <taxon>Shewanella</taxon>
    </lineage>
</organism>
<feature type="chain" id="PRO_1000083658" description="Protein ApaG">
    <location>
        <begin position="1"/>
        <end position="126"/>
    </location>
</feature>
<feature type="domain" description="ApaG" evidence="1">
    <location>
        <begin position="2"/>
        <end position="126"/>
    </location>
</feature>
<protein>
    <recommendedName>
        <fullName evidence="1">Protein ApaG</fullName>
    </recommendedName>
</protein>